<keyword id="KW-0150">Chloroplast</keyword>
<keyword id="KW-0249">Electron transport</keyword>
<keyword id="KW-0472">Membrane</keyword>
<keyword id="KW-0602">Photosynthesis</keyword>
<keyword id="KW-0934">Plastid</keyword>
<keyword id="KW-0793">Thylakoid</keyword>
<keyword id="KW-0812">Transmembrane</keyword>
<keyword id="KW-1133">Transmembrane helix</keyword>
<keyword id="KW-0813">Transport</keyword>
<proteinExistence type="inferred from homology"/>
<comment type="function">
    <text evidence="1">Component of the cytochrome b6-f complex, which mediates electron transfer between photosystem II (PSII) and photosystem I (PSI), cyclic electron flow around PSI, and state transitions. PetL is important for photoautotrophic growth as well as for electron transfer efficiency and stability of the cytochrome b6-f complex.</text>
</comment>
<comment type="subunit">
    <text evidence="1">The 4 large subunits of the cytochrome b6-f complex are cytochrome b6, subunit IV (17 kDa polypeptide, PetD), cytochrome f and the Rieske protein, while the 4 small subunits are PetG, PetL, PetM and PetN. The complex functions as a dimer.</text>
</comment>
<comment type="subcellular location">
    <subcellularLocation>
        <location evidence="1">Plastid</location>
        <location evidence="1">Chloroplast thylakoid membrane</location>
        <topology evidence="1">Single-pass membrane protein</topology>
    </subcellularLocation>
</comment>
<comment type="similarity">
    <text evidence="1">Belongs to the PetL family.</text>
</comment>
<gene>
    <name evidence="1" type="primary">petL</name>
</gene>
<feature type="chain" id="PRO_0000300151" description="Cytochrome b6-f complex subunit 6">
    <location>
        <begin position="1"/>
        <end position="31"/>
    </location>
</feature>
<feature type="transmembrane region" description="Helical" evidence="1">
    <location>
        <begin position="4"/>
        <end position="24"/>
    </location>
</feature>
<sequence length="31" mass="3417">MLTITSYFGFLLAVLIITSSLFIGLSKIQLI</sequence>
<evidence type="ECO:0000255" key="1">
    <source>
        <dbReference type="HAMAP-Rule" id="MF_00433"/>
    </source>
</evidence>
<dbReference type="EMBL" id="DQ886273">
    <property type="protein sequence ID" value="ABH88105.1"/>
    <property type="molecule type" value="Genomic_DNA"/>
</dbReference>
<dbReference type="EMBL" id="EU196765">
    <property type="protein sequence ID" value="ABW22764.1"/>
    <property type="molecule type" value="Genomic_DNA"/>
</dbReference>
<dbReference type="RefSeq" id="YP_001122825.1">
    <property type="nucleotide sequence ID" value="NC_009259.1"/>
</dbReference>
<dbReference type="SMR" id="A4GGC4"/>
<dbReference type="GeneID" id="4961783"/>
<dbReference type="KEGG" id="pvu:4961783"/>
<dbReference type="GO" id="GO:0009535">
    <property type="term" value="C:chloroplast thylakoid membrane"/>
    <property type="evidence" value="ECO:0007669"/>
    <property type="project" value="UniProtKB-SubCell"/>
</dbReference>
<dbReference type="GO" id="GO:0009512">
    <property type="term" value="C:cytochrome b6f complex"/>
    <property type="evidence" value="ECO:0007669"/>
    <property type="project" value="InterPro"/>
</dbReference>
<dbReference type="GO" id="GO:0045158">
    <property type="term" value="F:electron transporter, transferring electrons within cytochrome b6/f complex of photosystem II activity"/>
    <property type="evidence" value="ECO:0007669"/>
    <property type="project" value="UniProtKB-UniRule"/>
</dbReference>
<dbReference type="GO" id="GO:0015979">
    <property type="term" value="P:photosynthesis"/>
    <property type="evidence" value="ECO:0007669"/>
    <property type="project" value="UniProtKB-KW"/>
</dbReference>
<dbReference type="HAMAP" id="MF_00433">
    <property type="entry name" value="Cytb6_f_PetL"/>
    <property type="match status" value="1"/>
</dbReference>
<dbReference type="InterPro" id="IPR007802">
    <property type="entry name" value="Cyt_b6/f_cplx_su6"/>
</dbReference>
<dbReference type="PANTHER" id="PTHR37266">
    <property type="entry name" value="CYTOCHROME B6-F COMPLEX SUBUNIT 6"/>
    <property type="match status" value="1"/>
</dbReference>
<dbReference type="PANTHER" id="PTHR37266:SF1">
    <property type="entry name" value="CYTOCHROME B6-F COMPLEX SUBUNIT 6"/>
    <property type="match status" value="1"/>
</dbReference>
<dbReference type="Pfam" id="PF05115">
    <property type="entry name" value="PetL"/>
    <property type="match status" value="1"/>
</dbReference>
<dbReference type="SUPFAM" id="SSF103436">
    <property type="entry name" value="PetL subunit of the cytochrome b6f complex"/>
    <property type="match status" value="1"/>
</dbReference>
<name>PETL_PHAVU</name>
<reference key="1">
    <citation type="journal article" date="2007" name="BMC Genomics">
        <title>Rapid evolutionary change of common bean (Phaseolus vulgaris L) plastome, and the genomic diversification of legume chloroplasts.</title>
        <authorList>
            <person name="Guo X."/>
            <person name="Castillo-Ramirez S."/>
            <person name="Gonzalez V."/>
            <person name="Bustos P."/>
            <person name="Fernandez-Vazquez J.L."/>
            <person name="Santamaria R.I."/>
            <person name="Arellano J."/>
            <person name="Cevallos M.A."/>
            <person name="Davila G."/>
        </authorList>
    </citation>
    <scope>NUCLEOTIDE SEQUENCE [LARGE SCALE GENOMIC DNA]</scope>
    <source>
        <strain>cv. Negro Jamapa</strain>
    </source>
</reference>
<reference key="2">
    <citation type="submission" date="2007-10" db="EMBL/GenBank/DDBJ databases">
        <title>Complete nucleotide sequence of the plastid genome of the common bean, Phaseolus vulgaris.</title>
        <authorList>
            <person name="Moore M.J."/>
            <person name="Triplett E.W."/>
            <person name="Broughton W.J."/>
            <person name="Soltis P.S."/>
            <person name="Soltis D.E."/>
        </authorList>
    </citation>
    <scope>NUCLEOTIDE SEQUENCE [LARGE SCALE GENOMIC DNA]</scope>
</reference>
<accession>A4GGC4</accession>
<accession>A8W7Z4</accession>
<protein>
    <recommendedName>
        <fullName evidence="1">Cytochrome b6-f complex subunit 6</fullName>
    </recommendedName>
    <alternativeName>
        <fullName evidence="1">Cytochrome b6-f complex subunit PetL</fullName>
    </alternativeName>
    <alternativeName>
        <fullName evidence="1">Cytochrome b6-f complex subunit VI</fullName>
    </alternativeName>
</protein>
<organism>
    <name type="scientific">Phaseolus vulgaris</name>
    <name type="common">Kidney bean</name>
    <name type="synonym">French bean</name>
    <dbReference type="NCBI Taxonomy" id="3885"/>
    <lineage>
        <taxon>Eukaryota</taxon>
        <taxon>Viridiplantae</taxon>
        <taxon>Streptophyta</taxon>
        <taxon>Embryophyta</taxon>
        <taxon>Tracheophyta</taxon>
        <taxon>Spermatophyta</taxon>
        <taxon>Magnoliopsida</taxon>
        <taxon>eudicotyledons</taxon>
        <taxon>Gunneridae</taxon>
        <taxon>Pentapetalae</taxon>
        <taxon>rosids</taxon>
        <taxon>fabids</taxon>
        <taxon>Fabales</taxon>
        <taxon>Fabaceae</taxon>
        <taxon>Papilionoideae</taxon>
        <taxon>50 kb inversion clade</taxon>
        <taxon>NPAAA clade</taxon>
        <taxon>indigoferoid/millettioid clade</taxon>
        <taxon>Phaseoleae</taxon>
        <taxon>Phaseolus</taxon>
    </lineage>
</organism>
<geneLocation type="chloroplast"/>